<dbReference type="EMBL" id="CP000830">
    <property type="protein sequence ID" value="ABV95303.1"/>
    <property type="molecule type" value="Genomic_DNA"/>
</dbReference>
<dbReference type="RefSeq" id="WP_012180226.1">
    <property type="nucleotide sequence ID" value="NC_009952.1"/>
</dbReference>
<dbReference type="SMR" id="A8LQ63"/>
<dbReference type="STRING" id="398580.Dshi_3570"/>
<dbReference type="KEGG" id="dsh:Dshi_3570"/>
<dbReference type="eggNOG" id="COG0484">
    <property type="taxonomic scope" value="Bacteria"/>
</dbReference>
<dbReference type="HOGENOM" id="CLU_017633_0_7_5"/>
<dbReference type="OrthoDB" id="9779889at2"/>
<dbReference type="Proteomes" id="UP000006833">
    <property type="component" value="Chromosome"/>
</dbReference>
<dbReference type="GO" id="GO:0005737">
    <property type="term" value="C:cytoplasm"/>
    <property type="evidence" value="ECO:0007669"/>
    <property type="project" value="UniProtKB-SubCell"/>
</dbReference>
<dbReference type="GO" id="GO:0005524">
    <property type="term" value="F:ATP binding"/>
    <property type="evidence" value="ECO:0007669"/>
    <property type="project" value="InterPro"/>
</dbReference>
<dbReference type="GO" id="GO:0031072">
    <property type="term" value="F:heat shock protein binding"/>
    <property type="evidence" value="ECO:0007669"/>
    <property type="project" value="InterPro"/>
</dbReference>
<dbReference type="GO" id="GO:0051082">
    <property type="term" value="F:unfolded protein binding"/>
    <property type="evidence" value="ECO:0007669"/>
    <property type="project" value="UniProtKB-UniRule"/>
</dbReference>
<dbReference type="GO" id="GO:0008270">
    <property type="term" value="F:zinc ion binding"/>
    <property type="evidence" value="ECO:0007669"/>
    <property type="project" value="UniProtKB-UniRule"/>
</dbReference>
<dbReference type="GO" id="GO:0051085">
    <property type="term" value="P:chaperone cofactor-dependent protein refolding"/>
    <property type="evidence" value="ECO:0007669"/>
    <property type="project" value="TreeGrafter"/>
</dbReference>
<dbReference type="GO" id="GO:0006260">
    <property type="term" value="P:DNA replication"/>
    <property type="evidence" value="ECO:0007669"/>
    <property type="project" value="UniProtKB-KW"/>
</dbReference>
<dbReference type="GO" id="GO:0042026">
    <property type="term" value="P:protein refolding"/>
    <property type="evidence" value="ECO:0007669"/>
    <property type="project" value="TreeGrafter"/>
</dbReference>
<dbReference type="GO" id="GO:0009408">
    <property type="term" value="P:response to heat"/>
    <property type="evidence" value="ECO:0007669"/>
    <property type="project" value="InterPro"/>
</dbReference>
<dbReference type="CDD" id="cd06257">
    <property type="entry name" value="DnaJ"/>
    <property type="match status" value="1"/>
</dbReference>
<dbReference type="CDD" id="cd10747">
    <property type="entry name" value="DnaJ_C"/>
    <property type="match status" value="1"/>
</dbReference>
<dbReference type="CDD" id="cd10719">
    <property type="entry name" value="DnaJ_zf"/>
    <property type="match status" value="1"/>
</dbReference>
<dbReference type="FunFam" id="1.10.287.110:FF:000034">
    <property type="entry name" value="Chaperone protein DnaJ"/>
    <property type="match status" value="1"/>
</dbReference>
<dbReference type="FunFam" id="2.10.230.10:FF:000002">
    <property type="entry name" value="Molecular chaperone DnaJ"/>
    <property type="match status" value="1"/>
</dbReference>
<dbReference type="FunFam" id="2.60.260.20:FF:000004">
    <property type="entry name" value="Molecular chaperone DnaJ"/>
    <property type="match status" value="1"/>
</dbReference>
<dbReference type="Gene3D" id="1.10.287.110">
    <property type="entry name" value="DnaJ domain"/>
    <property type="match status" value="1"/>
</dbReference>
<dbReference type="Gene3D" id="2.10.230.10">
    <property type="entry name" value="Heat shock protein DnaJ, cysteine-rich domain"/>
    <property type="match status" value="1"/>
</dbReference>
<dbReference type="Gene3D" id="2.60.260.20">
    <property type="entry name" value="Urease metallochaperone UreE, N-terminal domain"/>
    <property type="match status" value="2"/>
</dbReference>
<dbReference type="HAMAP" id="MF_01152">
    <property type="entry name" value="DnaJ"/>
    <property type="match status" value="1"/>
</dbReference>
<dbReference type="InterPro" id="IPR012724">
    <property type="entry name" value="DnaJ"/>
</dbReference>
<dbReference type="InterPro" id="IPR002939">
    <property type="entry name" value="DnaJ_C"/>
</dbReference>
<dbReference type="InterPro" id="IPR001623">
    <property type="entry name" value="DnaJ_domain"/>
</dbReference>
<dbReference type="InterPro" id="IPR018253">
    <property type="entry name" value="DnaJ_domain_CS"/>
</dbReference>
<dbReference type="InterPro" id="IPR008971">
    <property type="entry name" value="HSP40/DnaJ_pept-bd"/>
</dbReference>
<dbReference type="InterPro" id="IPR001305">
    <property type="entry name" value="HSP_DnaJ_Cys-rich_dom"/>
</dbReference>
<dbReference type="InterPro" id="IPR036410">
    <property type="entry name" value="HSP_DnaJ_Cys-rich_dom_sf"/>
</dbReference>
<dbReference type="InterPro" id="IPR036869">
    <property type="entry name" value="J_dom_sf"/>
</dbReference>
<dbReference type="NCBIfam" id="TIGR02349">
    <property type="entry name" value="DnaJ_bact"/>
    <property type="match status" value="1"/>
</dbReference>
<dbReference type="NCBIfam" id="NF008035">
    <property type="entry name" value="PRK10767.1"/>
    <property type="match status" value="1"/>
</dbReference>
<dbReference type="PANTHER" id="PTHR43096:SF48">
    <property type="entry name" value="CHAPERONE PROTEIN DNAJ"/>
    <property type="match status" value="1"/>
</dbReference>
<dbReference type="PANTHER" id="PTHR43096">
    <property type="entry name" value="DNAJ HOMOLOG 1, MITOCHONDRIAL-RELATED"/>
    <property type="match status" value="1"/>
</dbReference>
<dbReference type="Pfam" id="PF00226">
    <property type="entry name" value="DnaJ"/>
    <property type="match status" value="1"/>
</dbReference>
<dbReference type="Pfam" id="PF01556">
    <property type="entry name" value="DnaJ_C"/>
    <property type="match status" value="1"/>
</dbReference>
<dbReference type="Pfam" id="PF00684">
    <property type="entry name" value="DnaJ_CXXCXGXG"/>
    <property type="match status" value="1"/>
</dbReference>
<dbReference type="PRINTS" id="PR00625">
    <property type="entry name" value="JDOMAIN"/>
</dbReference>
<dbReference type="SMART" id="SM00271">
    <property type="entry name" value="DnaJ"/>
    <property type="match status" value="1"/>
</dbReference>
<dbReference type="SUPFAM" id="SSF46565">
    <property type="entry name" value="Chaperone J-domain"/>
    <property type="match status" value="1"/>
</dbReference>
<dbReference type="SUPFAM" id="SSF57938">
    <property type="entry name" value="DnaJ/Hsp40 cysteine-rich domain"/>
    <property type="match status" value="1"/>
</dbReference>
<dbReference type="SUPFAM" id="SSF49493">
    <property type="entry name" value="HSP40/DnaJ peptide-binding domain"/>
    <property type="match status" value="2"/>
</dbReference>
<dbReference type="PROSITE" id="PS00636">
    <property type="entry name" value="DNAJ_1"/>
    <property type="match status" value="1"/>
</dbReference>
<dbReference type="PROSITE" id="PS50076">
    <property type="entry name" value="DNAJ_2"/>
    <property type="match status" value="1"/>
</dbReference>
<dbReference type="PROSITE" id="PS51188">
    <property type="entry name" value="ZF_CR"/>
    <property type="match status" value="1"/>
</dbReference>
<evidence type="ECO:0000255" key="1">
    <source>
        <dbReference type="HAMAP-Rule" id="MF_01152"/>
    </source>
</evidence>
<sequence>MAKRDYYDVLGVSKGASPDEIKKGFRKKAKELHPDRNSDNPNAEAQFKEANEAYDILKDPDKKAAYDRYGHAAFENGSGGPRGPGGFGGQGQGDFASAFSDVFEDLFGDFMGGQRGGGRQRAARGSDLRYNLRITLEQAFMGMQKTISVPGTVSCSACEGTGAEGGAEPVVCPTCSGMGKVRAQQGFFTIEKTCPTCSGMGQIIKNPCQACRGAGREEKTRALSVNIPAGVETGTRIRLAGEGDAGVRGGPSGDLYIFIEVEEHRIFQREGLDLYCRVPVSMTSAALGGDVEVPTIEGGRSRVKIPSGSQSGRQMRLRGKGMPALRGAGTGDMFIELAVETPVNLTMRQRELLREFEAESQDNQPETSKFFKTVKSFWDGMKS</sequence>
<name>DNAJ_DINSH</name>
<protein>
    <recommendedName>
        <fullName evidence="1">Chaperone protein DnaJ</fullName>
    </recommendedName>
</protein>
<keyword id="KW-0143">Chaperone</keyword>
<keyword id="KW-0963">Cytoplasm</keyword>
<keyword id="KW-0235">DNA replication</keyword>
<keyword id="KW-0479">Metal-binding</keyword>
<keyword id="KW-1185">Reference proteome</keyword>
<keyword id="KW-0677">Repeat</keyword>
<keyword id="KW-0346">Stress response</keyword>
<keyword id="KW-0862">Zinc</keyword>
<keyword id="KW-0863">Zinc-finger</keyword>
<accession>A8LQ63</accession>
<gene>
    <name evidence="1" type="primary">dnaJ</name>
    <name type="ordered locus">Dshi_3570</name>
</gene>
<reference key="1">
    <citation type="journal article" date="2010" name="ISME J.">
        <title>The complete genome sequence of the algal symbiont Dinoroseobacter shibae: a hitchhiker's guide to life in the sea.</title>
        <authorList>
            <person name="Wagner-Dobler I."/>
            <person name="Ballhausen B."/>
            <person name="Berger M."/>
            <person name="Brinkhoff T."/>
            <person name="Buchholz I."/>
            <person name="Bunk B."/>
            <person name="Cypionka H."/>
            <person name="Daniel R."/>
            <person name="Drepper T."/>
            <person name="Gerdts G."/>
            <person name="Hahnke S."/>
            <person name="Han C."/>
            <person name="Jahn D."/>
            <person name="Kalhoefer D."/>
            <person name="Kiss H."/>
            <person name="Klenk H.P."/>
            <person name="Kyrpides N."/>
            <person name="Liebl W."/>
            <person name="Liesegang H."/>
            <person name="Meincke L."/>
            <person name="Pati A."/>
            <person name="Petersen J."/>
            <person name="Piekarski T."/>
            <person name="Pommerenke C."/>
            <person name="Pradella S."/>
            <person name="Pukall R."/>
            <person name="Rabus R."/>
            <person name="Stackebrandt E."/>
            <person name="Thole S."/>
            <person name="Thompson L."/>
            <person name="Tielen P."/>
            <person name="Tomasch J."/>
            <person name="von Jan M."/>
            <person name="Wanphrut N."/>
            <person name="Wichels A."/>
            <person name="Zech H."/>
            <person name="Simon M."/>
        </authorList>
    </citation>
    <scope>NUCLEOTIDE SEQUENCE [LARGE SCALE GENOMIC DNA]</scope>
    <source>
        <strain>DSM 16493 / NCIMB 14021 / DFL 12</strain>
    </source>
</reference>
<comment type="function">
    <text evidence="1">Participates actively in the response to hyperosmotic and heat shock by preventing the aggregation of stress-denatured proteins and by disaggregating proteins, also in an autonomous, DnaK-independent fashion. Unfolded proteins bind initially to DnaJ; upon interaction with the DnaJ-bound protein, DnaK hydrolyzes its bound ATP, resulting in the formation of a stable complex. GrpE releases ADP from DnaK; ATP binding to DnaK triggers the release of the substrate protein, thus completing the reaction cycle. Several rounds of ATP-dependent interactions between DnaJ, DnaK and GrpE are required for fully efficient folding. Also involved, together with DnaK and GrpE, in the DNA replication of plasmids through activation of initiation proteins.</text>
</comment>
<comment type="cofactor">
    <cofactor evidence="1">
        <name>Zn(2+)</name>
        <dbReference type="ChEBI" id="CHEBI:29105"/>
    </cofactor>
    <text evidence="1">Binds 2 Zn(2+) ions per monomer.</text>
</comment>
<comment type="subunit">
    <text evidence="1">Homodimer.</text>
</comment>
<comment type="subcellular location">
    <subcellularLocation>
        <location evidence="1">Cytoplasm</location>
    </subcellularLocation>
</comment>
<comment type="domain">
    <text evidence="1">The J domain is necessary and sufficient to stimulate DnaK ATPase activity. Zinc center 1 plays an important role in the autonomous, DnaK-independent chaperone activity of DnaJ. Zinc center 2 is essential for interaction with DnaK and for DnaJ activity.</text>
</comment>
<comment type="similarity">
    <text evidence="1">Belongs to the DnaJ family.</text>
</comment>
<proteinExistence type="inferred from homology"/>
<organism>
    <name type="scientific">Dinoroseobacter shibae (strain DSM 16493 / NCIMB 14021 / DFL 12)</name>
    <dbReference type="NCBI Taxonomy" id="398580"/>
    <lineage>
        <taxon>Bacteria</taxon>
        <taxon>Pseudomonadati</taxon>
        <taxon>Pseudomonadota</taxon>
        <taxon>Alphaproteobacteria</taxon>
        <taxon>Rhodobacterales</taxon>
        <taxon>Roseobacteraceae</taxon>
        <taxon>Dinoroseobacter</taxon>
    </lineage>
</organism>
<feature type="chain" id="PRO_1000085186" description="Chaperone protein DnaJ">
    <location>
        <begin position="1"/>
        <end position="383"/>
    </location>
</feature>
<feature type="domain" description="J" evidence="1">
    <location>
        <begin position="5"/>
        <end position="70"/>
    </location>
</feature>
<feature type="repeat" description="CXXCXGXG motif">
    <location>
        <begin position="155"/>
        <end position="162"/>
    </location>
</feature>
<feature type="repeat" description="CXXCXGXG motif">
    <location>
        <begin position="172"/>
        <end position="179"/>
    </location>
</feature>
<feature type="repeat" description="CXXCXGXG motif">
    <location>
        <begin position="194"/>
        <end position="201"/>
    </location>
</feature>
<feature type="repeat" description="CXXCXGXG motif">
    <location>
        <begin position="208"/>
        <end position="215"/>
    </location>
</feature>
<feature type="zinc finger region" description="CR-type" evidence="1">
    <location>
        <begin position="142"/>
        <end position="220"/>
    </location>
</feature>
<feature type="binding site" evidence="1">
    <location>
        <position position="155"/>
    </location>
    <ligand>
        <name>Zn(2+)</name>
        <dbReference type="ChEBI" id="CHEBI:29105"/>
        <label>1</label>
    </ligand>
</feature>
<feature type="binding site" evidence="1">
    <location>
        <position position="158"/>
    </location>
    <ligand>
        <name>Zn(2+)</name>
        <dbReference type="ChEBI" id="CHEBI:29105"/>
        <label>1</label>
    </ligand>
</feature>
<feature type="binding site" evidence="1">
    <location>
        <position position="172"/>
    </location>
    <ligand>
        <name>Zn(2+)</name>
        <dbReference type="ChEBI" id="CHEBI:29105"/>
        <label>2</label>
    </ligand>
</feature>
<feature type="binding site" evidence="1">
    <location>
        <position position="175"/>
    </location>
    <ligand>
        <name>Zn(2+)</name>
        <dbReference type="ChEBI" id="CHEBI:29105"/>
        <label>2</label>
    </ligand>
</feature>
<feature type="binding site" evidence="1">
    <location>
        <position position="194"/>
    </location>
    <ligand>
        <name>Zn(2+)</name>
        <dbReference type="ChEBI" id="CHEBI:29105"/>
        <label>2</label>
    </ligand>
</feature>
<feature type="binding site" evidence="1">
    <location>
        <position position="197"/>
    </location>
    <ligand>
        <name>Zn(2+)</name>
        <dbReference type="ChEBI" id="CHEBI:29105"/>
        <label>2</label>
    </ligand>
</feature>
<feature type="binding site" evidence="1">
    <location>
        <position position="208"/>
    </location>
    <ligand>
        <name>Zn(2+)</name>
        <dbReference type="ChEBI" id="CHEBI:29105"/>
        <label>1</label>
    </ligand>
</feature>
<feature type="binding site" evidence="1">
    <location>
        <position position="211"/>
    </location>
    <ligand>
        <name>Zn(2+)</name>
        <dbReference type="ChEBI" id="CHEBI:29105"/>
        <label>1</label>
    </ligand>
</feature>